<sequence length="82" mass="9191">MVTIRLARHGAKKRPFYQVVVADSRNARNGRFIERVGFFNPIASEKEEGTRLDLDRIAHWVGQGATISDRVAALIKEVNKAA</sequence>
<reference key="1">
    <citation type="journal article" date="2008" name="J. Bacteriol.">
        <title>The pangenome structure of Escherichia coli: comparative genomic analysis of E. coli commensal and pathogenic isolates.</title>
        <authorList>
            <person name="Rasko D.A."/>
            <person name="Rosovitz M.J."/>
            <person name="Myers G.S.A."/>
            <person name="Mongodin E.F."/>
            <person name="Fricke W.F."/>
            <person name="Gajer P."/>
            <person name="Crabtree J."/>
            <person name="Sebaihia M."/>
            <person name="Thomson N.R."/>
            <person name="Chaudhuri R."/>
            <person name="Henderson I.R."/>
            <person name="Sperandio V."/>
            <person name="Ravel J."/>
        </authorList>
    </citation>
    <scope>NUCLEOTIDE SEQUENCE [LARGE SCALE GENOMIC DNA]</scope>
    <source>
        <strain>HS</strain>
    </source>
</reference>
<accession>A8A3B6</accession>
<keyword id="KW-0687">Ribonucleoprotein</keyword>
<keyword id="KW-0689">Ribosomal protein</keyword>
<gene>
    <name evidence="1" type="primary">rpsP</name>
    <name type="ordered locus">EcHS_A2768</name>
</gene>
<evidence type="ECO:0000255" key="1">
    <source>
        <dbReference type="HAMAP-Rule" id="MF_00385"/>
    </source>
</evidence>
<evidence type="ECO:0000305" key="2"/>
<protein>
    <recommendedName>
        <fullName evidence="1">Small ribosomal subunit protein bS16</fullName>
    </recommendedName>
    <alternativeName>
        <fullName evidence="2">30S ribosomal protein S16</fullName>
    </alternativeName>
</protein>
<proteinExistence type="inferred from homology"/>
<feature type="chain" id="PRO_1000060709" description="Small ribosomal subunit protein bS16">
    <location>
        <begin position="1"/>
        <end position="82"/>
    </location>
</feature>
<dbReference type="EMBL" id="CP000802">
    <property type="protein sequence ID" value="ABV07020.1"/>
    <property type="molecule type" value="Genomic_DNA"/>
</dbReference>
<dbReference type="RefSeq" id="WP_000256450.1">
    <property type="nucleotide sequence ID" value="NC_009800.1"/>
</dbReference>
<dbReference type="SMR" id="A8A3B6"/>
<dbReference type="GeneID" id="93774459"/>
<dbReference type="KEGG" id="ecx:EcHS_A2768"/>
<dbReference type="HOGENOM" id="CLU_100590_5_1_6"/>
<dbReference type="GO" id="GO:0005737">
    <property type="term" value="C:cytoplasm"/>
    <property type="evidence" value="ECO:0007669"/>
    <property type="project" value="UniProtKB-ARBA"/>
</dbReference>
<dbReference type="GO" id="GO:0015935">
    <property type="term" value="C:small ribosomal subunit"/>
    <property type="evidence" value="ECO:0007669"/>
    <property type="project" value="TreeGrafter"/>
</dbReference>
<dbReference type="GO" id="GO:0003735">
    <property type="term" value="F:structural constituent of ribosome"/>
    <property type="evidence" value="ECO:0007669"/>
    <property type="project" value="InterPro"/>
</dbReference>
<dbReference type="GO" id="GO:0006412">
    <property type="term" value="P:translation"/>
    <property type="evidence" value="ECO:0007669"/>
    <property type="project" value="UniProtKB-UniRule"/>
</dbReference>
<dbReference type="FunFam" id="3.30.1320.10:FF:000001">
    <property type="entry name" value="30S ribosomal protein S16"/>
    <property type="match status" value="1"/>
</dbReference>
<dbReference type="Gene3D" id="3.30.1320.10">
    <property type="match status" value="1"/>
</dbReference>
<dbReference type="HAMAP" id="MF_00385">
    <property type="entry name" value="Ribosomal_bS16"/>
    <property type="match status" value="1"/>
</dbReference>
<dbReference type="InterPro" id="IPR000307">
    <property type="entry name" value="Ribosomal_bS16"/>
</dbReference>
<dbReference type="InterPro" id="IPR020592">
    <property type="entry name" value="Ribosomal_bS16_CS"/>
</dbReference>
<dbReference type="InterPro" id="IPR023803">
    <property type="entry name" value="Ribosomal_bS16_dom_sf"/>
</dbReference>
<dbReference type="NCBIfam" id="TIGR00002">
    <property type="entry name" value="S16"/>
    <property type="match status" value="1"/>
</dbReference>
<dbReference type="PANTHER" id="PTHR12919">
    <property type="entry name" value="30S RIBOSOMAL PROTEIN S16"/>
    <property type="match status" value="1"/>
</dbReference>
<dbReference type="PANTHER" id="PTHR12919:SF20">
    <property type="entry name" value="SMALL RIBOSOMAL SUBUNIT PROTEIN BS16M"/>
    <property type="match status" value="1"/>
</dbReference>
<dbReference type="Pfam" id="PF00886">
    <property type="entry name" value="Ribosomal_S16"/>
    <property type="match status" value="1"/>
</dbReference>
<dbReference type="SUPFAM" id="SSF54565">
    <property type="entry name" value="Ribosomal protein S16"/>
    <property type="match status" value="1"/>
</dbReference>
<dbReference type="PROSITE" id="PS00732">
    <property type="entry name" value="RIBOSOMAL_S16"/>
    <property type="match status" value="1"/>
</dbReference>
<organism>
    <name type="scientific">Escherichia coli O9:H4 (strain HS)</name>
    <dbReference type="NCBI Taxonomy" id="331112"/>
    <lineage>
        <taxon>Bacteria</taxon>
        <taxon>Pseudomonadati</taxon>
        <taxon>Pseudomonadota</taxon>
        <taxon>Gammaproteobacteria</taxon>
        <taxon>Enterobacterales</taxon>
        <taxon>Enterobacteriaceae</taxon>
        <taxon>Escherichia</taxon>
    </lineage>
</organism>
<comment type="similarity">
    <text evidence="1">Belongs to the bacterial ribosomal protein bS16 family.</text>
</comment>
<name>RS16_ECOHS</name>